<sequence>MSQDSATTTPPPPLTSDVSMPSGEEDEPKHVTSEEEAPVTSETNLKLPLMPELEESNHTAEVVSEKVTPETMTLESEGLNHAAEDSEQTHEVTPETETAKLEVLNHTAEDSEQTHEVTPEKETVKSEFLNHVAEDSEQTHEVTPETETVKSEVLNHAAEDSEQPRGVTPTPETETSEADTSLLVTSETEEPNHAAEDYSETEPSQKLMLEQRRKYMEVEDWTEPELPDEAVLEAAASVPEPKQPEPQTPPPPPSTTTSTVASRSLAEMMNREEAEVEEKQKIQIPRSLGSFKEETNKISDLSETELNALQELRHLLQVSQDSSKTSIWGVPLLKDDRTDVVLLKFLRARDFKPQEAYSMLNKTLQWRIDFNIEELLDENLGDDLDKVVFMQGQDKENHPVCYNVYGEFQNKDLYQKTFSDEEKRERFLRWRIQFLEKSIRNLDFVAGGVSTICQVNDLKNSPGPGKTELRLATKQALHLLQDNYPEFVSKQIFINVPWWYLAFYRIISPFMSQRSKSKLVFAGPSRSAETLLKYISPEHVPVQYGGLSVDNCECNSDFTHDDIATEITVKPTTKQTVEIIVYEKCTIVWEIRVVGWEVSYGAEFVPENKEGYTVIIQKPRKMTAKNELVVSHSFKVGEVGRILLTVDNPTSTKKMLIYRFKVKPLACE</sequence>
<organism>
    <name type="scientific">Arabidopsis thaliana</name>
    <name type="common">Mouse-ear cress</name>
    <dbReference type="NCBI Taxonomy" id="3702"/>
    <lineage>
        <taxon>Eukaryota</taxon>
        <taxon>Viridiplantae</taxon>
        <taxon>Streptophyta</taxon>
        <taxon>Embryophyta</taxon>
        <taxon>Tracheophyta</taxon>
        <taxon>Spermatophyta</taxon>
        <taxon>Magnoliopsida</taxon>
        <taxon>eudicotyledons</taxon>
        <taxon>Gunneridae</taxon>
        <taxon>Pentapetalae</taxon>
        <taxon>rosids</taxon>
        <taxon>malvids</taxon>
        <taxon>Brassicales</taxon>
        <taxon>Brassicaceae</taxon>
        <taxon>Camelineae</taxon>
        <taxon>Arabidopsis</taxon>
    </lineage>
</organism>
<gene>
    <name type="primary">PATL5</name>
    <name type="ordered locus">At4g09160</name>
    <name type="ORF">T8A17.90</name>
</gene>
<comment type="function">
    <text evidence="1">Carrier protein that may be involved in membrane-trafficking events associated with cell plate formation during cytokinesis. Binds to some hydrophobic molecules such as phosphoinositides and promotes their transfer between the different cellular sites (By similarity).</text>
</comment>
<comment type="subcellular location">
    <subcellularLocation>
        <location evidence="1">Membrane</location>
        <topology evidence="1">Peripheral membrane protein</topology>
    </subcellularLocation>
    <subcellularLocation>
        <location evidence="1">Cytoplasm</location>
    </subcellularLocation>
    <text evidence="1">Mainly membrane-associated. Also cytoplasmic (By similarity).</text>
</comment>
<comment type="miscellaneous">
    <text>'Patella' means 'small plate' in Latin.</text>
</comment>
<comment type="similarity">
    <text evidence="5">Belongs to the patellin family.</text>
</comment>
<comment type="sequence caution" evidence="5">
    <conflict type="erroneous gene model prediction">
        <sequence resource="EMBL-CDS" id="CAB78040"/>
    </conflict>
</comment>
<proteinExistence type="evidence at protein level"/>
<name>PATL5_ARATH</name>
<protein>
    <recommendedName>
        <fullName>Patellin-5</fullName>
    </recommendedName>
</protein>
<dbReference type="EMBL" id="AL161514">
    <property type="protein sequence ID" value="CAB78040.1"/>
    <property type="status" value="ALT_SEQ"/>
    <property type="molecule type" value="Genomic_DNA"/>
</dbReference>
<dbReference type="EMBL" id="CP002687">
    <property type="protein sequence ID" value="AEE82730.1"/>
    <property type="molecule type" value="Genomic_DNA"/>
</dbReference>
<dbReference type="EMBL" id="AK229180">
    <property type="protein sequence ID" value="BAF01050.1"/>
    <property type="molecule type" value="mRNA"/>
</dbReference>
<dbReference type="PIR" id="H85092">
    <property type="entry name" value="H85092"/>
</dbReference>
<dbReference type="RefSeq" id="NP_192655.2">
    <property type="nucleotide sequence ID" value="NM_116985.3"/>
</dbReference>
<dbReference type="SMR" id="Q9M0R2"/>
<dbReference type="FunCoup" id="Q9M0R2">
    <property type="interactions" value="379"/>
</dbReference>
<dbReference type="STRING" id="3702.Q9M0R2"/>
<dbReference type="GlyGen" id="Q9M0R2">
    <property type="glycosylation" value="2 sites"/>
</dbReference>
<dbReference type="iPTMnet" id="Q9M0R2"/>
<dbReference type="PaxDb" id="3702-AT4G09160.1"/>
<dbReference type="ProteomicsDB" id="236367"/>
<dbReference type="EnsemblPlants" id="AT4G09160.1">
    <property type="protein sequence ID" value="AT4G09160.1"/>
    <property type="gene ID" value="AT4G09160"/>
</dbReference>
<dbReference type="GeneID" id="826497"/>
<dbReference type="Gramene" id="AT4G09160.1">
    <property type="protein sequence ID" value="AT4G09160.1"/>
    <property type="gene ID" value="AT4G09160"/>
</dbReference>
<dbReference type="KEGG" id="ath:AT4G09160"/>
<dbReference type="Araport" id="AT4G09160"/>
<dbReference type="TAIR" id="AT4G09160">
    <property type="gene designation" value="PATL5"/>
</dbReference>
<dbReference type="eggNOG" id="KOG1471">
    <property type="taxonomic scope" value="Eukaryota"/>
</dbReference>
<dbReference type="HOGENOM" id="CLU_023762_2_0_1"/>
<dbReference type="InParanoid" id="Q9M0R2"/>
<dbReference type="PhylomeDB" id="Q9M0R2"/>
<dbReference type="PRO" id="PR:Q9M0R2"/>
<dbReference type="Proteomes" id="UP000006548">
    <property type="component" value="Chromosome 4"/>
</dbReference>
<dbReference type="ExpressionAtlas" id="Q9M0R2">
    <property type="expression patterns" value="baseline and differential"/>
</dbReference>
<dbReference type="GO" id="GO:0005737">
    <property type="term" value="C:cytoplasm"/>
    <property type="evidence" value="ECO:0007669"/>
    <property type="project" value="UniProtKB-SubCell"/>
</dbReference>
<dbReference type="GO" id="GO:0016020">
    <property type="term" value="C:membrane"/>
    <property type="evidence" value="ECO:0007669"/>
    <property type="project" value="UniProtKB-SubCell"/>
</dbReference>
<dbReference type="GO" id="GO:0008289">
    <property type="term" value="F:lipid binding"/>
    <property type="evidence" value="ECO:0007669"/>
    <property type="project" value="UniProtKB-KW"/>
</dbReference>
<dbReference type="GO" id="GO:0051301">
    <property type="term" value="P:cell division"/>
    <property type="evidence" value="ECO:0007669"/>
    <property type="project" value="UniProtKB-KW"/>
</dbReference>
<dbReference type="GO" id="GO:0071365">
    <property type="term" value="P:cellular response to auxin stimulus"/>
    <property type="evidence" value="ECO:0000316"/>
    <property type="project" value="TAIR"/>
</dbReference>
<dbReference type="GO" id="GO:1901703">
    <property type="term" value="P:protein localization involved in auxin polar transport"/>
    <property type="evidence" value="ECO:0000316"/>
    <property type="project" value="TAIR"/>
</dbReference>
<dbReference type="CDD" id="cd00170">
    <property type="entry name" value="SEC14"/>
    <property type="match status" value="1"/>
</dbReference>
<dbReference type="FunFam" id="1.10.8.20:FF:000008">
    <property type="entry name" value="SEC14 cytosolic factor family protein"/>
    <property type="match status" value="1"/>
</dbReference>
<dbReference type="FunFam" id="3.40.525.10:FF:000022">
    <property type="entry name" value="SEC14 cytosolic factor family protein"/>
    <property type="match status" value="1"/>
</dbReference>
<dbReference type="Gene3D" id="3.40.525.10">
    <property type="entry name" value="CRAL-TRIO lipid binding domain"/>
    <property type="match status" value="1"/>
</dbReference>
<dbReference type="Gene3D" id="2.60.120.680">
    <property type="entry name" value="GOLD domain"/>
    <property type="match status" value="1"/>
</dbReference>
<dbReference type="Gene3D" id="1.10.8.20">
    <property type="entry name" value="N-terminal domain of phosphatidylinositol transfer protein sec14p"/>
    <property type="match status" value="1"/>
</dbReference>
<dbReference type="InterPro" id="IPR001251">
    <property type="entry name" value="CRAL-TRIO_dom"/>
</dbReference>
<dbReference type="InterPro" id="IPR036865">
    <property type="entry name" value="CRAL-TRIO_dom_sf"/>
</dbReference>
<dbReference type="InterPro" id="IPR011074">
    <property type="entry name" value="CRAL/TRIO_N_dom"/>
</dbReference>
<dbReference type="InterPro" id="IPR036273">
    <property type="entry name" value="CRAL/TRIO_N_dom_sf"/>
</dbReference>
<dbReference type="InterPro" id="IPR009038">
    <property type="entry name" value="GOLD_dom"/>
</dbReference>
<dbReference type="InterPro" id="IPR036598">
    <property type="entry name" value="GOLD_dom_sf"/>
</dbReference>
<dbReference type="InterPro" id="IPR044834">
    <property type="entry name" value="PATL"/>
</dbReference>
<dbReference type="InterPro" id="IPR056794">
    <property type="entry name" value="PATL1-6_C_GOLD"/>
</dbReference>
<dbReference type="PANTHER" id="PTHR45932">
    <property type="entry name" value="PATELLIN-1"/>
    <property type="match status" value="1"/>
</dbReference>
<dbReference type="PANTHER" id="PTHR45932:SF14">
    <property type="entry name" value="PATELLIN-5"/>
    <property type="match status" value="1"/>
</dbReference>
<dbReference type="Pfam" id="PF00650">
    <property type="entry name" value="CRAL_TRIO"/>
    <property type="match status" value="1"/>
</dbReference>
<dbReference type="Pfam" id="PF03765">
    <property type="entry name" value="CRAL_TRIO_N"/>
    <property type="match status" value="1"/>
</dbReference>
<dbReference type="Pfam" id="PF25099">
    <property type="entry name" value="GOLD_PATL1_C"/>
    <property type="match status" value="1"/>
</dbReference>
<dbReference type="SMART" id="SM01100">
    <property type="entry name" value="CRAL_TRIO_N"/>
    <property type="match status" value="1"/>
</dbReference>
<dbReference type="SMART" id="SM00516">
    <property type="entry name" value="SEC14"/>
    <property type="match status" value="1"/>
</dbReference>
<dbReference type="SUPFAM" id="SSF52087">
    <property type="entry name" value="CRAL/TRIO domain"/>
    <property type="match status" value="1"/>
</dbReference>
<dbReference type="SUPFAM" id="SSF46938">
    <property type="entry name" value="CRAL/TRIO N-terminal domain"/>
    <property type="match status" value="1"/>
</dbReference>
<dbReference type="SUPFAM" id="SSF101576">
    <property type="entry name" value="Supernatant protein factor (SPF), C-terminal domain"/>
    <property type="match status" value="1"/>
</dbReference>
<dbReference type="PROSITE" id="PS50191">
    <property type="entry name" value="CRAL_TRIO"/>
    <property type="match status" value="1"/>
</dbReference>
<dbReference type="PROSITE" id="PS50866">
    <property type="entry name" value="GOLD"/>
    <property type="match status" value="1"/>
</dbReference>
<accession>Q9M0R2</accession>
<accession>Q0WP99</accession>
<feature type="chain" id="PRO_0000215589" description="Patellin-5">
    <location>
        <begin position="1"/>
        <end position="668"/>
    </location>
</feature>
<feature type="domain" description="CRAL-TRIO" evidence="2">
    <location>
        <begin position="377"/>
        <end position="552"/>
    </location>
</feature>
<feature type="domain" description="GOLD" evidence="3">
    <location>
        <begin position="556"/>
        <end position="662"/>
    </location>
</feature>
<feature type="region of interest" description="Disordered" evidence="4">
    <location>
        <begin position="1"/>
        <end position="263"/>
    </location>
</feature>
<feature type="compositionally biased region" description="Basic and acidic residues" evidence="4">
    <location>
        <begin position="55"/>
        <end position="68"/>
    </location>
</feature>
<feature type="compositionally biased region" description="Basic and acidic residues" evidence="4">
    <location>
        <begin position="82"/>
        <end position="100"/>
    </location>
</feature>
<feature type="compositionally biased region" description="Basic and acidic residues" evidence="4">
    <location>
        <begin position="107"/>
        <end position="125"/>
    </location>
</feature>
<feature type="compositionally biased region" description="Basic and acidic residues" evidence="4">
    <location>
        <begin position="132"/>
        <end position="150"/>
    </location>
</feature>
<feature type="compositionally biased region" description="Polar residues" evidence="4">
    <location>
        <begin position="170"/>
        <end position="186"/>
    </location>
</feature>
<feature type="compositionally biased region" description="Acidic residues" evidence="4">
    <location>
        <begin position="218"/>
        <end position="231"/>
    </location>
</feature>
<feature type="compositionally biased region" description="Pro residues" evidence="4">
    <location>
        <begin position="244"/>
        <end position="254"/>
    </location>
</feature>
<feature type="modified residue" description="Phosphoserine" evidence="6 7">
    <location>
        <position position="290"/>
    </location>
</feature>
<evidence type="ECO:0000250" key="1"/>
<evidence type="ECO:0000255" key="2">
    <source>
        <dbReference type="PROSITE-ProRule" id="PRU00056"/>
    </source>
</evidence>
<evidence type="ECO:0000255" key="3">
    <source>
        <dbReference type="PROSITE-ProRule" id="PRU00096"/>
    </source>
</evidence>
<evidence type="ECO:0000256" key="4">
    <source>
        <dbReference type="SAM" id="MobiDB-lite"/>
    </source>
</evidence>
<evidence type="ECO:0000305" key="5"/>
<evidence type="ECO:0007744" key="6">
    <source>
    </source>
</evidence>
<evidence type="ECO:0007744" key="7">
    <source>
    </source>
</evidence>
<reference key="1">
    <citation type="journal article" date="1999" name="Nature">
        <title>Sequence and analysis of chromosome 4 of the plant Arabidopsis thaliana.</title>
        <authorList>
            <person name="Mayer K.F.X."/>
            <person name="Schueller C."/>
            <person name="Wambutt R."/>
            <person name="Murphy G."/>
            <person name="Volckaert G."/>
            <person name="Pohl T."/>
            <person name="Duesterhoeft A."/>
            <person name="Stiekema W."/>
            <person name="Entian K.-D."/>
            <person name="Terryn N."/>
            <person name="Harris B."/>
            <person name="Ansorge W."/>
            <person name="Brandt P."/>
            <person name="Grivell L.A."/>
            <person name="Rieger M."/>
            <person name="Weichselgartner M."/>
            <person name="de Simone V."/>
            <person name="Obermaier B."/>
            <person name="Mache R."/>
            <person name="Mueller M."/>
            <person name="Kreis M."/>
            <person name="Delseny M."/>
            <person name="Puigdomenech P."/>
            <person name="Watson M."/>
            <person name="Schmidtheini T."/>
            <person name="Reichert B."/>
            <person name="Portetelle D."/>
            <person name="Perez-Alonso M."/>
            <person name="Boutry M."/>
            <person name="Bancroft I."/>
            <person name="Vos P."/>
            <person name="Hoheisel J."/>
            <person name="Zimmermann W."/>
            <person name="Wedler H."/>
            <person name="Ridley P."/>
            <person name="Langham S.-A."/>
            <person name="McCullagh B."/>
            <person name="Bilham L."/>
            <person name="Robben J."/>
            <person name="van der Schueren J."/>
            <person name="Grymonprez B."/>
            <person name="Chuang Y.-J."/>
            <person name="Vandenbussche F."/>
            <person name="Braeken M."/>
            <person name="Weltjens I."/>
            <person name="Voet M."/>
            <person name="Bastiaens I."/>
            <person name="Aert R."/>
            <person name="Defoor E."/>
            <person name="Weitzenegger T."/>
            <person name="Bothe G."/>
            <person name="Ramsperger U."/>
            <person name="Hilbert H."/>
            <person name="Braun M."/>
            <person name="Holzer E."/>
            <person name="Brandt A."/>
            <person name="Peters S."/>
            <person name="van Staveren M."/>
            <person name="Dirkse W."/>
            <person name="Mooijman P."/>
            <person name="Klein Lankhorst R."/>
            <person name="Rose M."/>
            <person name="Hauf J."/>
            <person name="Koetter P."/>
            <person name="Berneiser S."/>
            <person name="Hempel S."/>
            <person name="Feldpausch M."/>
            <person name="Lamberth S."/>
            <person name="Van den Daele H."/>
            <person name="De Keyser A."/>
            <person name="Buysshaert C."/>
            <person name="Gielen J."/>
            <person name="Villarroel R."/>
            <person name="De Clercq R."/>
            <person name="van Montagu M."/>
            <person name="Rogers J."/>
            <person name="Cronin A."/>
            <person name="Quail M.A."/>
            <person name="Bray-Allen S."/>
            <person name="Clark L."/>
            <person name="Doggett J."/>
            <person name="Hall S."/>
            <person name="Kay M."/>
            <person name="Lennard N."/>
            <person name="McLay K."/>
            <person name="Mayes R."/>
            <person name="Pettett A."/>
            <person name="Rajandream M.A."/>
            <person name="Lyne M."/>
            <person name="Benes V."/>
            <person name="Rechmann S."/>
            <person name="Borkova D."/>
            <person name="Bloecker H."/>
            <person name="Scharfe M."/>
            <person name="Grimm M."/>
            <person name="Loehnert T.-H."/>
            <person name="Dose S."/>
            <person name="de Haan M."/>
            <person name="Maarse A.C."/>
            <person name="Schaefer M."/>
            <person name="Mueller-Auer S."/>
            <person name="Gabel C."/>
            <person name="Fuchs M."/>
            <person name="Fartmann B."/>
            <person name="Granderath K."/>
            <person name="Dauner D."/>
            <person name="Herzl A."/>
            <person name="Neumann S."/>
            <person name="Argiriou A."/>
            <person name="Vitale D."/>
            <person name="Liguori R."/>
            <person name="Piravandi E."/>
            <person name="Massenet O."/>
            <person name="Quigley F."/>
            <person name="Clabauld G."/>
            <person name="Muendlein A."/>
            <person name="Felber R."/>
            <person name="Schnabl S."/>
            <person name="Hiller R."/>
            <person name="Schmidt W."/>
            <person name="Lecharny A."/>
            <person name="Aubourg S."/>
            <person name="Chefdor F."/>
            <person name="Cooke R."/>
            <person name="Berger C."/>
            <person name="Monfort A."/>
            <person name="Casacuberta E."/>
            <person name="Gibbons T."/>
            <person name="Weber N."/>
            <person name="Vandenbol M."/>
            <person name="Bargues M."/>
            <person name="Terol J."/>
            <person name="Torres A."/>
            <person name="Perez-Perez A."/>
            <person name="Purnelle B."/>
            <person name="Bent E."/>
            <person name="Johnson S."/>
            <person name="Tacon D."/>
            <person name="Jesse T."/>
            <person name="Heijnen L."/>
            <person name="Schwarz S."/>
            <person name="Scholler P."/>
            <person name="Heber S."/>
            <person name="Francs P."/>
            <person name="Bielke C."/>
            <person name="Frishman D."/>
            <person name="Haase D."/>
            <person name="Lemcke K."/>
            <person name="Mewes H.-W."/>
            <person name="Stocker S."/>
            <person name="Zaccaria P."/>
            <person name="Bevan M."/>
            <person name="Wilson R.K."/>
            <person name="de la Bastide M."/>
            <person name="Habermann K."/>
            <person name="Parnell L."/>
            <person name="Dedhia N."/>
            <person name="Gnoj L."/>
            <person name="Schutz K."/>
            <person name="Huang E."/>
            <person name="Spiegel L."/>
            <person name="Sekhon M."/>
            <person name="Murray J."/>
            <person name="Sheet P."/>
            <person name="Cordes M."/>
            <person name="Abu-Threideh J."/>
            <person name="Stoneking T."/>
            <person name="Kalicki J."/>
            <person name="Graves T."/>
            <person name="Harmon G."/>
            <person name="Edwards J."/>
            <person name="Latreille P."/>
            <person name="Courtney L."/>
            <person name="Cloud J."/>
            <person name="Abbott A."/>
            <person name="Scott K."/>
            <person name="Johnson D."/>
            <person name="Minx P."/>
            <person name="Bentley D."/>
            <person name="Fulton B."/>
            <person name="Miller N."/>
            <person name="Greco T."/>
            <person name="Kemp K."/>
            <person name="Kramer J."/>
            <person name="Fulton L."/>
            <person name="Mardis E."/>
            <person name="Dante M."/>
            <person name="Pepin K."/>
            <person name="Hillier L.W."/>
            <person name="Nelson J."/>
            <person name="Spieth J."/>
            <person name="Ryan E."/>
            <person name="Andrews S."/>
            <person name="Geisel C."/>
            <person name="Layman D."/>
            <person name="Du H."/>
            <person name="Ali J."/>
            <person name="Berghoff A."/>
            <person name="Jones K."/>
            <person name="Drone K."/>
            <person name="Cotton M."/>
            <person name="Joshu C."/>
            <person name="Antonoiu B."/>
            <person name="Zidanic M."/>
            <person name="Strong C."/>
            <person name="Sun H."/>
            <person name="Lamar B."/>
            <person name="Yordan C."/>
            <person name="Ma P."/>
            <person name="Zhong J."/>
            <person name="Preston R."/>
            <person name="Vil D."/>
            <person name="Shekher M."/>
            <person name="Matero A."/>
            <person name="Shah R."/>
            <person name="Swaby I.K."/>
            <person name="O'Shaughnessy A."/>
            <person name="Rodriguez M."/>
            <person name="Hoffman J."/>
            <person name="Till S."/>
            <person name="Granat S."/>
            <person name="Shohdy N."/>
            <person name="Hasegawa A."/>
            <person name="Hameed A."/>
            <person name="Lodhi M."/>
            <person name="Johnson A."/>
            <person name="Chen E."/>
            <person name="Marra M.A."/>
            <person name="Martienssen R."/>
            <person name="McCombie W.R."/>
        </authorList>
    </citation>
    <scope>NUCLEOTIDE SEQUENCE [LARGE SCALE GENOMIC DNA]</scope>
    <source>
        <strain>cv. Columbia</strain>
    </source>
</reference>
<reference key="2">
    <citation type="journal article" date="2017" name="Plant J.">
        <title>Araport11: a complete reannotation of the Arabidopsis thaliana reference genome.</title>
        <authorList>
            <person name="Cheng C.Y."/>
            <person name="Krishnakumar V."/>
            <person name="Chan A.P."/>
            <person name="Thibaud-Nissen F."/>
            <person name="Schobel S."/>
            <person name="Town C.D."/>
        </authorList>
    </citation>
    <scope>GENOME REANNOTATION</scope>
    <source>
        <strain>cv. Columbia</strain>
    </source>
</reference>
<reference key="3">
    <citation type="submission" date="2006-07" db="EMBL/GenBank/DDBJ databases">
        <title>Large-scale analysis of RIKEN Arabidopsis full-length (RAFL) cDNAs.</title>
        <authorList>
            <person name="Totoki Y."/>
            <person name="Seki M."/>
            <person name="Ishida J."/>
            <person name="Nakajima M."/>
            <person name="Enju A."/>
            <person name="Kamiya A."/>
            <person name="Narusaka M."/>
            <person name="Shin-i T."/>
            <person name="Nakagawa M."/>
            <person name="Sakamoto N."/>
            <person name="Oishi K."/>
            <person name="Kohara Y."/>
            <person name="Kobayashi M."/>
            <person name="Toyoda A."/>
            <person name="Sakaki Y."/>
            <person name="Sakurai T."/>
            <person name="Iida K."/>
            <person name="Akiyama K."/>
            <person name="Satou M."/>
            <person name="Toyoda T."/>
            <person name="Konagaya A."/>
            <person name="Carninci P."/>
            <person name="Kawai J."/>
            <person name="Hayashizaki Y."/>
            <person name="Shinozaki K."/>
        </authorList>
    </citation>
    <scope>NUCLEOTIDE SEQUENCE [LARGE SCALE MRNA]</scope>
    <source>
        <strain>cv. Columbia</strain>
    </source>
</reference>
<reference key="4">
    <citation type="journal article" date="2004" name="Plant Physiol.">
        <title>Patellin1, a novel Sec14-like protein, localizes to the cell plate and binds phosphoinositides.</title>
        <authorList>
            <person name="Peterman T.K."/>
            <person name="Ohol Y.M."/>
            <person name="McReynolds L.J."/>
            <person name="Luna E.J."/>
        </authorList>
    </citation>
    <scope>GENE FAMILY</scope>
    <scope>NOMENCLATURE</scope>
</reference>
<reference key="5">
    <citation type="journal article" date="2009" name="J. Proteomics">
        <title>Phosphoproteomic analysis of nuclei-enriched fractions from Arabidopsis thaliana.</title>
        <authorList>
            <person name="Jones A.M.E."/>
            <person name="MacLean D."/>
            <person name="Studholme D.J."/>
            <person name="Serna-Sanz A."/>
            <person name="Andreasson E."/>
            <person name="Rathjen J.P."/>
            <person name="Peck S.C."/>
        </authorList>
    </citation>
    <scope>PHOSPHORYLATION [LARGE SCALE ANALYSIS] AT SER-290</scope>
    <scope>IDENTIFICATION BY MASS SPECTROMETRY [LARGE SCALE ANALYSIS]</scope>
    <source>
        <strain>cv. Columbia</strain>
    </source>
</reference>
<reference key="6">
    <citation type="journal article" date="2009" name="Plant Physiol.">
        <title>Large-scale Arabidopsis phosphoproteome profiling reveals novel chloroplast kinase substrates and phosphorylation networks.</title>
        <authorList>
            <person name="Reiland S."/>
            <person name="Messerli G."/>
            <person name="Baerenfaller K."/>
            <person name="Gerrits B."/>
            <person name="Endler A."/>
            <person name="Grossmann J."/>
            <person name="Gruissem W."/>
            <person name="Baginsky S."/>
        </authorList>
    </citation>
    <scope>PHOSPHORYLATION [LARGE SCALE ANALYSIS] AT SER-290</scope>
    <scope>IDENTIFICATION BY MASS SPECTROMETRY [LARGE SCALE ANALYSIS]</scope>
</reference>
<keyword id="KW-0131">Cell cycle</keyword>
<keyword id="KW-0132">Cell division</keyword>
<keyword id="KW-0963">Cytoplasm</keyword>
<keyword id="KW-0446">Lipid-binding</keyword>
<keyword id="KW-0472">Membrane</keyword>
<keyword id="KW-0597">Phosphoprotein</keyword>
<keyword id="KW-1185">Reference proteome</keyword>
<keyword id="KW-0813">Transport</keyword>